<protein>
    <recommendedName>
        <fullName evidence="1">Ribonuclease P protein component</fullName>
        <shortName evidence="1">RNase P protein</shortName>
        <shortName evidence="1">RNaseP protein</shortName>
        <ecNumber evidence="1">3.1.26.5</ecNumber>
    </recommendedName>
    <alternativeName>
        <fullName evidence="1">Protein C5</fullName>
    </alternativeName>
</protein>
<gene>
    <name evidence="1" type="primary">rnpA</name>
    <name type="ordered locus">SPO0537</name>
</gene>
<sequence>MPPAVSVCASSGISVLRKRSDFLKAARARRQGAGSMMVQARKRDAGEAEGIRVGFTCSKKVGNAVARNRAKRRLREAARLVLPDMGRPGWDYVLIGRPSDTASRPFDGLLDDLRRALRKLHAPKP</sequence>
<name>RNPA_RUEPO</name>
<feature type="chain" id="PRO_0000198524" description="Ribonuclease P protein component">
    <location>
        <begin position="1"/>
        <end position="125"/>
    </location>
</feature>
<accession>Q5LW06</accession>
<proteinExistence type="inferred from homology"/>
<organism>
    <name type="scientific">Ruegeria pomeroyi (strain ATCC 700808 / DSM 15171 / DSS-3)</name>
    <name type="common">Silicibacter pomeroyi</name>
    <dbReference type="NCBI Taxonomy" id="246200"/>
    <lineage>
        <taxon>Bacteria</taxon>
        <taxon>Pseudomonadati</taxon>
        <taxon>Pseudomonadota</taxon>
        <taxon>Alphaproteobacteria</taxon>
        <taxon>Rhodobacterales</taxon>
        <taxon>Roseobacteraceae</taxon>
        <taxon>Ruegeria</taxon>
    </lineage>
</organism>
<comment type="function">
    <text evidence="1">RNaseP catalyzes the removal of the 5'-leader sequence from pre-tRNA to produce the mature 5'-terminus. It can also cleave other RNA substrates such as 4.5S RNA. The protein component plays an auxiliary but essential role in vivo by binding to the 5'-leader sequence and broadening the substrate specificity of the ribozyme.</text>
</comment>
<comment type="catalytic activity">
    <reaction evidence="1">
        <text>Endonucleolytic cleavage of RNA, removing 5'-extranucleotides from tRNA precursor.</text>
        <dbReference type="EC" id="3.1.26.5"/>
    </reaction>
</comment>
<comment type="subunit">
    <text evidence="1">Consists of a catalytic RNA component (M1 or rnpB) and a protein subunit.</text>
</comment>
<comment type="similarity">
    <text evidence="1">Belongs to the RnpA family.</text>
</comment>
<comment type="sequence caution" evidence="2">
    <conflict type="erroneous initiation">
        <sequence resource="EMBL-CDS" id="AAV93854"/>
    </conflict>
</comment>
<dbReference type="EC" id="3.1.26.5" evidence="1"/>
<dbReference type="EMBL" id="CP000031">
    <property type="protein sequence ID" value="AAV93854.1"/>
    <property type="status" value="ALT_INIT"/>
    <property type="molecule type" value="Genomic_DNA"/>
</dbReference>
<dbReference type="RefSeq" id="WP_011046296.1">
    <property type="nucleotide sequence ID" value="NC_003911.12"/>
</dbReference>
<dbReference type="SMR" id="Q5LW06"/>
<dbReference type="STRING" id="246200.SPO0537"/>
<dbReference type="PaxDb" id="246200-SPO0537"/>
<dbReference type="KEGG" id="sil:SPO0537"/>
<dbReference type="eggNOG" id="COG0594">
    <property type="taxonomic scope" value="Bacteria"/>
</dbReference>
<dbReference type="HOGENOM" id="CLU_117179_6_3_5"/>
<dbReference type="OrthoDB" id="9810867at2"/>
<dbReference type="Proteomes" id="UP000001023">
    <property type="component" value="Chromosome"/>
</dbReference>
<dbReference type="GO" id="GO:0030677">
    <property type="term" value="C:ribonuclease P complex"/>
    <property type="evidence" value="ECO:0007669"/>
    <property type="project" value="TreeGrafter"/>
</dbReference>
<dbReference type="GO" id="GO:0042781">
    <property type="term" value="F:3'-tRNA processing endoribonuclease activity"/>
    <property type="evidence" value="ECO:0007669"/>
    <property type="project" value="TreeGrafter"/>
</dbReference>
<dbReference type="GO" id="GO:0004526">
    <property type="term" value="F:ribonuclease P activity"/>
    <property type="evidence" value="ECO:0007669"/>
    <property type="project" value="UniProtKB-UniRule"/>
</dbReference>
<dbReference type="GO" id="GO:0000049">
    <property type="term" value="F:tRNA binding"/>
    <property type="evidence" value="ECO:0007669"/>
    <property type="project" value="UniProtKB-UniRule"/>
</dbReference>
<dbReference type="GO" id="GO:0001682">
    <property type="term" value="P:tRNA 5'-leader removal"/>
    <property type="evidence" value="ECO:0007669"/>
    <property type="project" value="UniProtKB-UniRule"/>
</dbReference>
<dbReference type="Gene3D" id="3.30.230.10">
    <property type="match status" value="1"/>
</dbReference>
<dbReference type="HAMAP" id="MF_00227">
    <property type="entry name" value="RNase_P"/>
    <property type="match status" value="1"/>
</dbReference>
<dbReference type="InterPro" id="IPR020568">
    <property type="entry name" value="Ribosomal_Su5_D2-typ_SF"/>
</dbReference>
<dbReference type="InterPro" id="IPR014721">
    <property type="entry name" value="Ribsml_uS5_D2-typ_fold_subgr"/>
</dbReference>
<dbReference type="InterPro" id="IPR000100">
    <property type="entry name" value="RNase_P"/>
</dbReference>
<dbReference type="InterPro" id="IPR020539">
    <property type="entry name" value="RNase_P_CS"/>
</dbReference>
<dbReference type="NCBIfam" id="TIGR00188">
    <property type="entry name" value="rnpA"/>
    <property type="match status" value="1"/>
</dbReference>
<dbReference type="PANTHER" id="PTHR33992">
    <property type="entry name" value="RIBONUCLEASE P PROTEIN COMPONENT"/>
    <property type="match status" value="1"/>
</dbReference>
<dbReference type="PANTHER" id="PTHR33992:SF1">
    <property type="entry name" value="RIBONUCLEASE P PROTEIN COMPONENT"/>
    <property type="match status" value="1"/>
</dbReference>
<dbReference type="Pfam" id="PF00825">
    <property type="entry name" value="Ribonuclease_P"/>
    <property type="match status" value="1"/>
</dbReference>
<dbReference type="SUPFAM" id="SSF54211">
    <property type="entry name" value="Ribosomal protein S5 domain 2-like"/>
    <property type="match status" value="1"/>
</dbReference>
<dbReference type="PROSITE" id="PS00648">
    <property type="entry name" value="RIBONUCLEASE_P"/>
    <property type="match status" value="1"/>
</dbReference>
<evidence type="ECO:0000255" key="1">
    <source>
        <dbReference type="HAMAP-Rule" id="MF_00227"/>
    </source>
</evidence>
<evidence type="ECO:0000305" key="2"/>
<reference key="1">
    <citation type="journal article" date="2004" name="Nature">
        <title>Genome sequence of Silicibacter pomeroyi reveals adaptations to the marine environment.</title>
        <authorList>
            <person name="Moran M.A."/>
            <person name="Buchan A."/>
            <person name="Gonzalez J.M."/>
            <person name="Heidelberg J.F."/>
            <person name="Whitman W.B."/>
            <person name="Kiene R.P."/>
            <person name="Henriksen J.R."/>
            <person name="King G.M."/>
            <person name="Belas R."/>
            <person name="Fuqua C."/>
            <person name="Brinkac L.M."/>
            <person name="Lewis M."/>
            <person name="Johri S."/>
            <person name="Weaver B."/>
            <person name="Pai G."/>
            <person name="Eisen J.A."/>
            <person name="Rahe E."/>
            <person name="Sheldon W.M."/>
            <person name="Ye W."/>
            <person name="Miller T.R."/>
            <person name="Carlton J."/>
            <person name="Rasko D.A."/>
            <person name="Paulsen I.T."/>
            <person name="Ren Q."/>
            <person name="Daugherty S.C."/>
            <person name="DeBoy R.T."/>
            <person name="Dodson R.J."/>
            <person name="Durkin A.S."/>
            <person name="Madupu R."/>
            <person name="Nelson W.C."/>
            <person name="Sullivan S.A."/>
            <person name="Rosovitz M.J."/>
            <person name="Haft D.H."/>
            <person name="Selengut J."/>
            <person name="Ward N."/>
        </authorList>
    </citation>
    <scope>NUCLEOTIDE SEQUENCE [LARGE SCALE GENOMIC DNA]</scope>
    <source>
        <strain>ATCC 700808 / DSM 15171 / DSS-3</strain>
    </source>
</reference>
<reference key="2">
    <citation type="journal article" date="2014" name="Stand. Genomic Sci.">
        <title>An updated genome annotation for the model marine bacterium Ruegeria pomeroyi DSS-3.</title>
        <authorList>
            <person name="Rivers A.R."/>
            <person name="Smith C.B."/>
            <person name="Moran M.A."/>
        </authorList>
    </citation>
    <scope>GENOME REANNOTATION</scope>
    <source>
        <strain>ATCC 700808 / DSM 15171 / DSS-3</strain>
    </source>
</reference>
<keyword id="KW-0255">Endonuclease</keyword>
<keyword id="KW-0378">Hydrolase</keyword>
<keyword id="KW-0540">Nuclease</keyword>
<keyword id="KW-1185">Reference proteome</keyword>
<keyword id="KW-0694">RNA-binding</keyword>
<keyword id="KW-0819">tRNA processing</keyword>